<protein>
    <recommendedName>
        <fullName>NADP-dependent alcohol dehydrogenase C 2</fullName>
        <shortName>Ms-ADHC 2</shortName>
        <ecNumber>1.1.1.2</ecNumber>
    </recommendedName>
</protein>
<evidence type="ECO:0000250" key="1"/>
<evidence type="ECO:0000269" key="2">
    <source>
    </source>
</evidence>
<evidence type="ECO:0000269" key="3">
    <source>
    </source>
</evidence>
<evidence type="ECO:0000269" key="4">
    <source>
    </source>
</evidence>
<evidence type="ECO:0000305" key="5"/>
<keyword id="KW-0903">Direct protein sequencing</keyword>
<keyword id="KW-1017">Isopeptide bond</keyword>
<keyword id="KW-0479">Metal-binding</keyword>
<keyword id="KW-0521">NADP</keyword>
<keyword id="KW-0560">Oxidoreductase</keyword>
<keyword id="KW-1185">Reference proteome</keyword>
<keyword id="KW-0832">Ubl conjugation</keyword>
<keyword id="KW-0862">Zinc</keyword>
<dbReference type="EC" id="1.1.1.2"/>
<dbReference type="EMBL" id="CP000480">
    <property type="protein sequence ID" value="ABK71093.1"/>
    <property type="molecule type" value="Genomic_DNA"/>
</dbReference>
<dbReference type="EMBL" id="CP001663">
    <property type="protein sequence ID" value="AFP38728.1"/>
    <property type="molecule type" value="Genomic_DNA"/>
</dbReference>
<dbReference type="RefSeq" id="WP_011727367.1">
    <property type="nucleotide sequence ID" value="NZ_SIJM01000053.1"/>
</dbReference>
<dbReference type="RefSeq" id="YP_885435.1">
    <property type="nucleotide sequence ID" value="NC_008596.1"/>
</dbReference>
<dbReference type="RefSeq" id="YP_886664.1">
    <property type="nucleotide sequence ID" value="NC_008596.1"/>
</dbReference>
<dbReference type="SMR" id="P0CH37"/>
<dbReference type="KEGG" id="msb:LJ00_05150"/>
<dbReference type="KEGG" id="msb:LJ00_11525"/>
<dbReference type="KEGG" id="msg:MSMEI_2258"/>
<dbReference type="KEGG" id="msm:MSMEG_2317"/>
<dbReference type="PATRIC" id="fig|246196.19.peg.1024"/>
<dbReference type="OrthoDB" id="3567264at2"/>
<dbReference type="Proteomes" id="UP000000757">
    <property type="component" value="Chromosome"/>
</dbReference>
<dbReference type="Proteomes" id="UP000006158">
    <property type="component" value="Chromosome"/>
</dbReference>
<dbReference type="GO" id="GO:0008106">
    <property type="term" value="F:alcohol dehydrogenase (NADP+) activity"/>
    <property type="evidence" value="ECO:0007669"/>
    <property type="project" value="UniProtKB-EC"/>
</dbReference>
<dbReference type="GO" id="GO:0008270">
    <property type="term" value="F:zinc ion binding"/>
    <property type="evidence" value="ECO:0007669"/>
    <property type="project" value="InterPro"/>
</dbReference>
<dbReference type="CDD" id="cd05283">
    <property type="entry name" value="CAD1"/>
    <property type="match status" value="1"/>
</dbReference>
<dbReference type="FunFam" id="3.40.50.720:FF:000022">
    <property type="entry name" value="Cinnamyl alcohol dehydrogenase"/>
    <property type="match status" value="1"/>
</dbReference>
<dbReference type="Gene3D" id="3.90.180.10">
    <property type="entry name" value="Medium-chain alcohol dehydrogenases, catalytic domain"/>
    <property type="match status" value="1"/>
</dbReference>
<dbReference type="Gene3D" id="3.40.50.720">
    <property type="entry name" value="NAD(P)-binding Rossmann-like Domain"/>
    <property type="match status" value="1"/>
</dbReference>
<dbReference type="InterPro" id="IPR013149">
    <property type="entry name" value="ADH-like_C"/>
</dbReference>
<dbReference type="InterPro" id="IPR013154">
    <property type="entry name" value="ADH-like_N"/>
</dbReference>
<dbReference type="InterPro" id="IPR002328">
    <property type="entry name" value="ADH_Zn_CS"/>
</dbReference>
<dbReference type="InterPro" id="IPR047109">
    <property type="entry name" value="CAD-like"/>
</dbReference>
<dbReference type="InterPro" id="IPR011032">
    <property type="entry name" value="GroES-like_sf"/>
</dbReference>
<dbReference type="InterPro" id="IPR036291">
    <property type="entry name" value="NAD(P)-bd_dom_sf"/>
</dbReference>
<dbReference type="InterPro" id="IPR020843">
    <property type="entry name" value="PKS_ER"/>
</dbReference>
<dbReference type="PANTHER" id="PTHR42683">
    <property type="entry name" value="ALDEHYDE REDUCTASE"/>
    <property type="match status" value="1"/>
</dbReference>
<dbReference type="Pfam" id="PF08240">
    <property type="entry name" value="ADH_N"/>
    <property type="match status" value="1"/>
</dbReference>
<dbReference type="Pfam" id="PF00107">
    <property type="entry name" value="ADH_zinc_N"/>
    <property type="match status" value="1"/>
</dbReference>
<dbReference type="SMART" id="SM00829">
    <property type="entry name" value="PKS_ER"/>
    <property type="match status" value="1"/>
</dbReference>
<dbReference type="SUPFAM" id="SSF50129">
    <property type="entry name" value="GroES-like"/>
    <property type="match status" value="1"/>
</dbReference>
<dbReference type="SUPFAM" id="SSF51735">
    <property type="entry name" value="NAD(P)-binding Rossmann-fold domains"/>
    <property type="match status" value="1"/>
</dbReference>
<dbReference type="PROSITE" id="PS00059">
    <property type="entry name" value="ADH_ZINC"/>
    <property type="match status" value="1"/>
</dbReference>
<feature type="chain" id="PRO_0000396949" description="NADP-dependent alcohol dehydrogenase C 2">
    <location>
        <begin position="1"/>
        <end position="349"/>
    </location>
</feature>
<feature type="binding site" evidence="1">
    <location>
        <position position="41"/>
    </location>
    <ligand>
        <name>Zn(2+)</name>
        <dbReference type="ChEBI" id="CHEBI:29105"/>
        <label>1</label>
        <note>catalytic</note>
    </ligand>
</feature>
<feature type="binding site" evidence="1">
    <location>
        <position position="63"/>
    </location>
    <ligand>
        <name>Zn(2+)</name>
        <dbReference type="ChEBI" id="CHEBI:29105"/>
        <label>1</label>
        <note>catalytic</note>
    </ligand>
</feature>
<feature type="binding site" evidence="1">
    <location>
        <position position="94"/>
    </location>
    <ligand>
        <name>Zn(2+)</name>
        <dbReference type="ChEBI" id="CHEBI:29105"/>
        <label>2</label>
    </ligand>
</feature>
<feature type="binding site" evidence="1">
    <location>
        <position position="97"/>
    </location>
    <ligand>
        <name>Zn(2+)</name>
        <dbReference type="ChEBI" id="CHEBI:29105"/>
        <label>2</label>
    </ligand>
</feature>
<feature type="binding site" evidence="1">
    <location>
        <position position="100"/>
    </location>
    <ligand>
        <name>Zn(2+)</name>
        <dbReference type="ChEBI" id="CHEBI:29105"/>
        <label>2</label>
    </ligand>
</feature>
<feature type="binding site" evidence="1">
    <location>
        <position position="108"/>
    </location>
    <ligand>
        <name>Zn(2+)</name>
        <dbReference type="ChEBI" id="CHEBI:29105"/>
        <label>2</label>
    </ligand>
</feature>
<feature type="binding site" evidence="1">
    <location>
        <position position="159"/>
    </location>
    <ligand>
        <name>Zn(2+)</name>
        <dbReference type="ChEBI" id="CHEBI:29105"/>
        <label>1</label>
        <note>catalytic</note>
    </ligand>
</feature>
<feature type="cross-link" description="Isoglutamyl lysine isopeptide (Lys-Gln) (interchain with Q-Cter in protein Pup)" evidence="4">
    <location>
        <position position="210"/>
    </location>
</feature>
<organism>
    <name type="scientific">Mycolicibacterium smegmatis (strain ATCC 700084 / mc(2)155)</name>
    <name type="common">Mycobacterium smegmatis</name>
    <dbReference type="NCBI Taxonomy" id="246196"/>
    <lineage>
        <taxon>Bacteria</taxon>
        <taxon>Bacillati</taxon>
        <taxon>Actinomycetota</taxon>
        <taxon>Actinomycetes</taxon>
        <taxon>Mycobacteriales</taxon>
        <taxon>Mycobacteriaceae</taxon>
        <taxon>Mycolicibacterium</taxon>
    </lineage>
</organism>
<proteinExistence type="evidence at protein level"/>
<gene>
    <name type="primary">adhC2</name>
    <name type="synonym">adh</name>
    <name type="ordered locus">MSMEG_2317</name>
    <name type="ordered locus">MSMEI_2258</name>
</gene>
<comment type="function">
    <text>Prefers aldehydes over alcohols.</text>
</comment>
<comment type="catalytic activity">
    <reaction>
        <text>a primary alcohol + NADP(+) = an aldehyde + NADPH + H(+)</text>
        <dbReference type="Rhea" id="RHEA:15937"/>
        <dbReference type="ChEBI" id="CHEBI:15378"/>
        <dbReference type="ChEBI" id="CHEBI:15734"/>
        <dbReference type="ChEBI" id="CHEBI:17478"/>
        <dbReference type="ChEBI" id="CHEBI:57783"/>
        <dbReference type="ChEBI" id="CHEBI:58349"/>
        <dbReference type="EC" id="1.1.1.2"/>
    </reaction>
</comment>
<comment type="cofactor">
    <cofactor evidence="1">
        <name>Zn(2+)</name>
        <dbReference type="ChEBI" id="CHEBI:29105"/>
    </cofactor>
    <text evidence="1">Binds 2 Zn(2+) ions per subunit.</text>
</comment>
<comment type="biophysicochemical properties">
    <kinetics>
        <KM evidence="2">30 uM for octanal</KM>
        <KM evidence="2">40 uM for cinnamaldehyde</KM>
        <KM evidence="2">53 uM for benzaldehyde</KM>
    </kinetics>
</comment>
<comment type="induction">
    <text evidence="2">Has a higher specific activity when grown as a surface pellicle rather than in agitated cultures (at protein level).</text>
</comment>
<comment type="disruption phenotype">
    <text evidence="3">Not essential for growth, strains missing one copy or both grow slower and have a different morphology than wild-type.</text>
</comment>
<comment type="miscellaneous">
    <text>Pupylation of this protein has been demonstrated, however it is unknown if the protein concerned is the product of this gene, of the identical gene adhC1 (AC P0CH36), or of both genes.</text>
</comment>
<comment type="similarity">
    <text evidence="5">Belongs to the zinc-containing alcohol dehydrogenase family.</text>
</comment>
<name>ADHC2_MYCS2</name>
<reference key="1">
    <citation type="journal article" date="2001" name="FEMS Microbiol. Lett.">
        <title>Molecular and biochemical characterisation of Mycobacterium smegmatis alcohol dehydrogenase C.</title>
        <authorList>
            <person name="Galamba A."/>
            <person name="Soetaert K."/>
            <person name="Buyssens P."/>
            <person name="Monnaie D."/>
            <person name="Jacobs P."/>
            <person name="Content J."/>
        </authorList>
    </citation>
    <scope>NUCLEOTIDE SEQUENCE [GENOMIC DNA]</scope>
    <scope>PROTEIN SEQUENCE OF 1-14</scope>
    <scope>BIOPHYSICOCHEMICAL PROPERTIES</scope>
    <scope>INDUCTION</scope>
</reference>
<reference key="2">
    <citation type="submission" date="2006-10" db="EMBL/GenBank/DDBJ databases">
        <authorList>
            <person name="Fleischmann R.D."/>
            <person name="Dodson R.J."/>
            <person name="Haft D.H."/>
            <person name="Merkel J.S."/>
            <person name="Nelson W.C."/>
            <person name="Fraser C.M."/>
        </authorList>
    </citation>
    <scope>NUCLEOTIDE SEQUENCE [LARGE SCALE GENOMIC DNA]</scope>
    <source>
        <strain>ATCC 700084 / mc(2)155</strain>
    </source>
</reference>
<reference key="3">
    <citation type="journal article" date="2007" name="Genome Biol.">
        <title>Interrupted coding sequences in Mycobacterium smegmatis: authentic mutations or sequencing errors?</title>
        <authorList>
            <person name="Deshayes C."/>
            <person name="Perrodou E."/>
            <person name="Gallien S."/>
            <person name="Euphrasie D."/>
            <person name="Schaeffer C."/>
            <person name="Van-Dorsselaer A."/>
            <person name="Poch O."/>
            <person name="Lecompte O."/>
            <person name="Reyrat J.-M."/>
        </authorList>
    </citation>
    <scope>NUCLEOTIDE SEQUENCE [LARGE SCALE GENOMIC DNA]</scope>
    <source>
        <strain>ATCC 700084 / mc(2)155</strain>
    </source>
</reference>
<reference key="4">
    <citation type="journal article" date="2009" name="Genome Res.">
        <title>Ortho-proteogenomics: multiple proteomes investigation through orthology and a new MS-based protocol.</title>
        <authorList>
            <person name="Gallien S."/>
            <person name="Perrodou E."/>
            <person name="Carapito C."/>
            <person name="Deshayes C."/>
            <person name="Reyrat J.-M."/>
            <person name="Van Dorsselaer A."/>
            <person name="Poch O."/>
            <person name="Schaeffer C."/>
            <person name="Lecompte O."/>
        </authorList>
    </citation>
    <scope>NUCLEOTIDE SEQUENCE [LARGE SCALE GENOMIC DNA]</scope>
    <source>
        <strain>ATCC 700084 / mc(2)155</strain>
    </source>
</reference>
<reference key="5">
    <citation type="journal article" date="2001" name="Microbiology">
        <title>Disruption of adhC reveals a large duplication in the Mycobacterium smegmatis mc(2)155 genome.</title>
        <authorList>
            <person name="Galamba A."/>
            <person name="Soetaert K."/>
            <person name="Wang X.M."/>
            <person name="De Bruyn J."/>
            <person name="Jacobs P."/>
            <person name="Content J."/>
        </authorList>
    </citation>
    <scope>GENE DUPLICATION</scope>
    <scope>DISRUPTION PHENOTYPE</scope>
</reference>
<reference key="6">
    <citation type="journal article" date="2010" name="Mol. Biosyst.">
        <title>Expansion of the mycobacterial 'PUPylome'.</title>
        <authorList>
            <person name="Watrous J."/>
            <person name="Burns K."/>
            <person name="Liu W.T."/>
            <person name="Patel A."/>
            <person name="Hook V."/>
            <person name="Bafna V."/>
            <person name="Barry C.E. III"/>
            <person name="Bark S."/>
            <person name="Dorrestein P.C."/>
        </authorList>
    </citation>
    <scope>PUPYLATION AT LYS-210</scope>
    <scope>IDENTIFICATION BY MASS SPECTROMETRY</scope>
</reference>
<sequence>MSTVSAYAATSATEPLTKTTITRRAVGPHDVAFDIHFAGICHSDIHTVKAEWGVPNYPVVPGHEIAGVVTEVGSEVTKYKVGDRVGVGCFVDSCRECDNCKAGLEQYCTGTGMVGTYNAIDRDGTPTHGGYSGAIVVDENYVLRIPDSLPLDAAAPLLCAGITTYSPLRHWNAGPGKKVAVIGLGGLGHVAVKLAKAMGADVTVLSQSLKKMEDGLRLGASAYYATSDPETFDKLAGSFDLILNTVSANLDLGAYLGLLKLDGALVELGLPEHPMEVPAFPLLAQRRNLTGSMIGGIPETQEMLDFCAEHDVRPEIEIITPDYINEAYERVLASDVRYRFVIDTASLRS</sequence>
<accession>P0CH37</accession>
<accession>A0QR97</accession>
<accession>I7FIW6</accession>
<accession>Q9AE96</accession>